<comment type="function">
    <text evidence="4 6">Plays an important role during endosperm starch synthesis. Determines the type of amylopectin structure of starch grain. Synthesizes long B1 amylopectin chains by elongating short A and B1 chains, independently of the other soluble starch synthases. Barely active in japonica subspecies.</text>
</comment>
<comment type="catalytic activity">
    <reaction>
        <text>[(1-&gt;4)-alpha-D-glucosyl](n) + ADP-alpha-D-glucose = [(1-&gt;4)-alpha-D-glucosyl](n+1) + ADP + H(+)</text>
        <dbReference type="Rhea" id="RHEA:18189"/>
        <dbReference type="Rhea" id="RHEA-COMP:9584"/>
        <dbReference type="Rhea" id="RHEA-COMP:9587"/>
        <dbReference type="ChEBI" id="CHEBI:15378"/>
        <dbReference type="ChEBI" id="CHEBI:15444"/>
        <dbReference type="ChEBI" id="CHEBI:57498"/>
        <dbReference type="ChEBI" id="CHEBI:456216"/>
        <dbReference type="EC" id="2.4.1.21"/>
    </reaction>
</comment>
<comment type="pathway">
    <text>Glycan biosynthesis; starch biosynthesis.</text>
</comment>
<comment type="subcellular location">
    <subcellularLocation>
        <location>Plastid</location>
        <location>Amyloplast</location>
    </subcellularLocation>
    <subcellularLocation>
        <location>Plastid</location>
        <location>Chloroplast</location>
    </subcellularLocation>
    <text>Amyloplast or chloroplast, granule-bound and soluble.</text>
</comment>
<comment type="tissue specificity">
    <text evidence="4 5">Expressed most exclusively in endosperm.</text>
</comment>
<comment type="developmental stage">
    <text evidence="4">Expressed in developing caryopsis at 5 to 15 days after flowering. Expressed exclusively in the endosperm at 5 to 10 days after flowering.</text>
</comment>
<comment type="miscellaneous">
    <text>Increased activity due to variations in subspecies indica is associated with the synthesis of the L-type amylopectin, which contains much lower proportion of short amylopectin chains than the S-type amylopectin found in most japonica varieties. The difference in amylopectin chain composition explains why starch from japonica subspecies has a lower gelatinisation temperature than starch from indica subspecies.</text>
</comment>
<comment type="similarity">
    <text evidence="7">Belongs to the glycosyltransferase 1 family. Bacterial/plant glycogen synthase subfamily.</text>
</comment>
<comment type="sequence caution" evidence="7">
    <conflict type="erroneous gene model prediction">
        <sequence resource="EMBL-CDS" id="AAQ99280"/>
    </conflict>
</comment>
<sequence>MSSAVVASSTTFLVALASSASRGGPRRGRVVGVAAPPALLYDGRAGRLALRAPPPPRPRPRRRDAGVVRRADDGENEAAVERAGEDDEEEEEFSSGAWQPPRSRRGGVGKVLKRRGTVPPVGRYGSGGDAARVRGAAAPAPAPTQDAASSKNGALLSGRDDDTPASRNGSVVTGADKPAAATPPVTITKLPAPDSPVILPSVDKPQPEFVIPDATAPAPPPPGSNPRSSAPLPKPDNSEFAEDKSAKVVESAPKPKATRSSPIPAVEEETWDFKKYFDLNEPDAAEDGDDDDDWADSDASDSEIDQDDDSGPLAGENVMNVIVVAAECSPWCKTGGLGDVAGALPKALARRGHRVMVVVPRYGDYAEAQDVGIRKYYKAAGQDLEVKYFHAFIDGVDFVFIDAPLFRHRQDDIYGGNRQEIMKRMILFCKAAVEVPWHVPCGGVPYGDGNLVFLANDWHTALLPVYLKAYYRDNGMMQYTRSVLVIHNIAYQGRGPVDEFPYMELPEHYLDHFKLYDPVGGEHANIFGAGLKMADRVVTVSPGYLWELKTTEGGWGLHDIIRENDWKMNGIVNGIDYREWNPEVDVHLQSDGYANYTVASLDSGKPRCKAALQRELGLEVRDDVPLIGFIGRLDGQKGVDIIGDAMPWIAGQDVQLVLLGSGRRDLEVMLQRFEAQHNSKVRGWVGFSVKMAHRITAGADVLVMPSRFEPCGLNQLYAMAYGTVPVVHAVGGLRDTVSAFDPFEDTGLGWTFDRAEPHKLIEALGHCLETYRKYKESWRGLQVRGMSQDLSWDHAAELYEEVLVKAKYQW</sequence>
<evidence type="ECO:0000250" key="1"/>
<evidence type="ECO:0000255" key="2"/>
<evidence type="ECO:0000256" key="3">
    <source>
        <dbReference type="SAM" id="MobiDB-lite"/>
    </source>
</evidence>
<evidence type="ECO:0000269" key="4">
    <source>
    </source>
</evidence>
<evidence type="ECO:0000269" key="5">
    <source>
    </source>
</evidence>
<evidence type="ECO:0000269" key="6">
    <source>
    </source>
</evidence>
<evidence type="ECO:0000305" key="7"/>
<name>SSY23_ORYSI</name>
<protein>
    <recommendedName>
        <fullName>Soluble starch synthase 2-3, chloroplastic/amyloplastic</fullName>
        <ecNumber>2.4.1.21</ecNumber>
    </recommendedName>
    <alternativeName>
        <fullName>Soluble starch synthase II-3</fullName>
    </alternativeName>
    <alternativeName>
        <fullName>Starch synthase IIa</fullName>
    </alternativeName>
</protein>
<feature type="transit peptide" description="Chloroplast" evidence="2">
    <location>
        <begin position="1"/>
        <end position="16"/>
    </location>
</feature>
<feature type="chain" id="PRO_0000295651" description="Soluble starch synthase 2-3, chloroplastic/amyloplastic">
    <location>
        <begin position="17"/>
        <end position="810"/>
    </location>
</feature>
<feature type="region of interest" description="Disordered" evidence="3">
    <location>
        <begin position="43"/>
        <end position="265"/>
    </location>
</feature>
<feature type="region of interest" description="Disordered" evidence="3">
    <location>
        <begin position="281"/>
        <end position="313"/>
    </location>
</feature>
<feature type="compositionally biased region" description="Basic and acidic residues" evidence="3">
    <location>
        <begin position="63"/>
        <end position="83"/>
    </location>
</feature>
<feature type="compositionally biased region" description="Acidic residues" evidence="3">
    <location>
        <begin position="84"/>
        <end position="93"/>
    </location>
</feature>
<feature type="compositionally biased region" description="Basic residues" evidence="3">
    <location>
        <begin position="102"/>
        <end position="116"/>
    </location>
</feature>
<feature type="compositionally biased region" description="Low complexity" evidence="3">
    <location>
        <begin position="129"/>
        <end position="148"/>
    </location>
</feature>
<feature type="compositionally biased region" description="Acidic residues" evidence="3">
    <location>
        <begin position="281"/>
        <end position="310"/>
    </location>
</feature>
<feature type="binding site" evidence="1">
    <location>
        <position position="333"/>
    </location>
    <ligand>
        <name>ADP-alpha-D-glucose</name>
        <dbReference type="ChEBI" id="CHEBI:57498"/>
    </ligand>
</feature>
<feature type="mutagenesis site" description="Reduced activity; when associated with F-781. Loss of activity; when associated with M-737. Loss of activity; when associated with S-604 and F-781." evidence="6">
    <original>E</original>
    <variation>D</variation>
    <location>
        <position position="88"/>
    </location>
</feature>
<feature type="mutagenesis site" description="Loss of activity; when associated with M-737 and/or F-781." evidence="6">
    <original>G</original>
    <variation>S</variation>
    <location>
        <position position="604"/>
    </location>
</feature>
<feature type="mutagenesis site" description="Loss of activity. Loss of activity; when associated with D-88 and/or S-604 and/or F-781." evidence="6">
    <original>V</original>
    <variation>M</variation>
    <location>
        <position position="737"/>
    </location>
</feature>
<feature type="mutagenesis site" description="Reduced activity. Reduced activity; when associated with D-88. Loss of activity; when associated with S-604 and/or M-737." evidence="6">
    <original>L</original>
    <variation>F</variation>
    <location>
        <position position="781"/>
    </location>
</feature>
<organism>
    <name type="scientific">Oryza sativa subsp. indica</name>
    <name type="common">Rice</name>
    <dbReference type="NCBI Taxonomy" id="39946"/>
    <lineage>
        <taxon>Eukaryota</taxon>
        <taxon>Viridiplantae</taxon>
        <taxon>Streptophyta</taxon>
        <taxon>Embryophyta</taxon>
        <taxon>Tracheophyta</taxon>
        <taxon>Spermatophyta</taxon>
        <taxon>Magnoliopsida</taxon>
        <taxon>Liliopsida</taxon>
        <taxon>Poales</taxon>
        <taxon>Poaceae</taxon>
        <taxon>BOP clade</taxon>
        <taxon>Oryzoideae</taxon>
        <taxon>Oryzeae</taxon>
        <taxon>Oryzinae</taxon>
        <taxon>Oryza</taxon>
        <taxon>Oryza sativa</taxon>
    </lineage>
</organism>
<dbReference type="EC" id="2.4.1.21"/>
<dbReference type="EMBL" id="AY423717">
    <property type="protein sequence ID" value="AAQ99280.1"/>
    <property type="status" value="ALT_SEQ"/>
    <property type="molecule type" value="Genomic_DNA"/>
</dbReference>
<dbReference type="EMBL" id="AB115917">
    <property type="protein sequence ID" value="BAD90593.1"/>
    <property type="molecule type" value="mRNA"/>
</dbReference>
<dbReference type="EMBL" id="AB115918">
    <property type="protein sequence ID" value="BAD90594.1"/>
    <property type="molecule type" value="mRNA"/>
</dbReference>
<dbReference type="SMR" id="P0C586"/>
<dbReference type="CAZy" id="GT5">
    <property type="family name" value="Glycosyltransferase Family 5"/>
</dbReference>
<dbReference type="UniPathway" id="UPA00152"/>
<dbReference type="GO" id="GO:0009501">
    <property type="term" value="C:amyloplast"/>
    <property type="evidence" value="ECO:0007669"/>
    <property type="project" value="UniProtKB-SubCell"/>
</dbReference>
<dbReference type="GO" id="GO:0009507">
    <property type="term" value="C:chloroplast"/>
    <property type="evidence" value="ECO:0007669"/>
    <property type="project" value="UniProtKB-SubCell"/>
</dbReference>
<dbReference type="GO" id="GO:0009011">
    <property type="term" value="F:alpha-1,4-glucan glucosyltransferase (ADP-glucose donor) activity"/>
    <property type="evidence" value="ECO:0007669"/>
    <property type="project" value="UniProtKB-EC"/>
</dbReference>
<dbReference type="GO" id="GO:0004373">
    <property type="term" value="F:alpha-1,4-glucan glucosyltransferase (UDP-glucose donor) activity"/>
    <property type="evidence" value="ECO:0007669"/>
    <property type="project" value="InterPro"/>
</dbReference>
<dbReference type="GO" id="GO:0019252">
    <property type="term" value="P:starch biosynthetic process"/>
    <property type="evidence" value="ECO:0007669"/>
    <property type="project" value="UniProtKB-UniPathway"/>
</dbReference>
<dbReference type="CDD" id="cd03791">
    <property type="entry name" value="GT5_Glycogen_synthase_DULL1-like"/>
    <property type="match status" value="1"/>
</dbReference>
<dbReference type="FunFam" id="3.40.50.2000:FF:000048">
    <property type="entry name" value="Starch synthase, chloroplastic/amyloplastic"/>
    <property type="match status" value="1"/>
</dbReference>
<dbReference type="Gene3D" id="3.40.50.2000">
    <property type="entry name" value="Glycogen Phosphorylase B"/>
    <property type="match status" value="2"/>
</dbReference>
<dbReference type="HAMAP" id="MF_00484">
    <property type="entry name" value="Glycogen_synth"/>
    <property type="match status" value="1"/>
</dbReference>
<dbReference type="InterPro" id="IPR011835">
    <property type="entry name" value="GS/SS"/>
</dbReference>
<dbReference type="InterPro" id="IPR013534">
    <property type="entry name" value="Starch_synth_cat_dom"/>
</dbReference>
<dbReference type="NCBIfam" id="TIGR02095">
    <property type="entry name" value="glgA"/>
    <property type="match status" value="1"/>
</dbReference>
<dbReference type="PANTHER" id="PTHR45825">
    <property type="entry name" value="GRANULE-BOUND STARCH SYNTHASE 1, CHLOROPLASTIC/AMYLOPLASTIC"/>
    <property type="match status" value="1"/>
</dbReference>
<dbReference type="PANTHER" id="PTHR45825:SF4">
    <property type="entry name" value="SOLUBLE STARCH SYNTHASE 2-3, CHLOROPLASTIC_AMYLOPLASTIC"/>
    <property type="match status" value="1"/>
</dbReference>
<dbReference type="Pfam" id="PF13692">
    <property type="entry name" value="Glyco_trans_1_4"/>
    <property type="match status" value="1"/>
</dbReference>
<dbReference type="Pfam" id="PF08323">
    <property type="entry name" value="Glyco_transf_5"/>
    <property type="match status" value="1"/>
</dbReference>
<dbReference type="SUPFAM" id="SSF53756">
    <property type="entry name" value="UDP-Glycosyltransferase/glycogen phosphorylase"/>
    <property type="match status" value="1"/>
</dbReference>
<proteinExistence type="evidence at protein level"/>
<keyword id="KW-0035">Amyloplast</keyword>
<keyword id="KW-0150">Chloroplast</keyword>
<keyword id="KW-0903">Direct protein sequencing</keyword>
<keyword id="KW-0328">Glycosyltransferase</keyword>
<keyword id="KW-0934">Plastid</keyword>
<keyword id="KW-0750">Starch biosynthesis</keyword>
<keyword id="KW-0808">Transferase</keyword>
<keyword id="KW-0809">Transit peptide</keyword>
<gene>
    <name type="primary">SSII-3</name>
    <name type="synonym">ALK</name>
</gene>
<reference key="1">
    <citation type="journal article" date="2003" name="Sci. China, Ser. C, Life Sci.">
        <title>Map-based cloning of the ALK gene, which controls the gelatinization temperature of rice.</title>
        <authorList>
            <person name="Gao Z."/>
            <person name="Zeng D."/>
            <person name="Cui X."/>
            <person name="Zhou Y."/>
            <person name="Yan M."/>
            <person name="Huang D."/>
            <person name="Li J."/>
            <person name="Qian Q."/>
        </authorList>
    </citation>
    <scope>NUCLEOTIDE SEQUENCE [GENOMIC DNA]</scope>
    <source>
        <strain>cv. Shuangke Zao</strain>
    </source>
</reference>
<reference key="2">
    <citation type="journal article" date="2005" name="Plant Mol. Biol.">
        <title>Essential amino acids of starch synthase IIa differentiate amylopectin structure and starch quality between japonica and indica rice varieties.</title>
        <authorList>
            <person name="Nakamura Y."/>
            <person name="Francisco P.B. Jr."/>
            <person name="Hosaka Y."/>
            <person name="Sato A."/>
            <person name="Sawada T."/>
            <person name="Kubo A."/>
            <person name="Fujita N."/>
        </authorList>
    </citation>
    <scope>NUCLEOTIDE SEQUENCE [MRNA]</scope>
    <scope>FUNCTION</scope>
    <scope>MUTAGENESIS OF GLU-88; GLY-604; VAL-737 AND LEU-781</scope>
    <source>
        <strain>cv. IR36</strain>
        <strain>cv. Kasalath</strain>
    </source>
</reference>
<reference key="3">
    <citation type="journal article" date="2004" name="Planta">
        <title>Molecular cloning and expression analysis of three genes encoding starch synthase II in rice.</title>
        <authorList>
            <person name="Jiang H.W."/>
            <person name="Dian W.M."/>
            <person name="Liu F."/>
            <person name="Wu P."/>
        </authorList>
    </citation>
    <scope>PROTEIN SEQUENCE OF 71-78</scope>
    <scope>FUNCTION</scope>
    <scope>SUBCELLULAR LOCATION</scope>
    <scope>TISSUE SPECIFICITY</scope>
    <scope>DEVELOPMENTAL STAGE</scope>
</reference>
<reference key="4">
    <citation type="journal article" date="2004" name="Planta">
        <title>A comprehensive expression analysis of the starch synthase gene family in rice (Oryza sativa L.).</title>
        <authorList>
            <person name="Hirose T."/>
            <person name="Terao T."/>
        </authorList>
    </citation>
    <scope>SUBCELLULAR LOCATION</scope>
    <scope>TISSUE SPECIFICITY</scope>
    <scope>NOMENCLATURE</scope>
</reference>
<accession>P0C586</accession>
<accession>Q5DWW9</accession>
<accession>Q5DWX1</accession>
<accession>Q67X47</accession>
<accession>Q6TDS3</accession>
<accession>Q944W5</accession>